<name>ZHD8_ARATH</name>
<reference key="1">
    <citation type="journal article" date="2000" name="Nature">
        <title>Sequence and analysis of chromosome 5 of the plant Arabidopsis thaliana.</title>
        <authorList>
            <person name="Tabata S."/>
            <person name="Kaneko T."/>
            <person name="Nakamura Y."/>
            <person name="Kotani H."/>
            <person name="Kato T."/>
            <person name="Asamizu E."/>
            <person name="Miyajima N."/>
            <person name="Sasamoto S."/>
            <person name="Kimura T."/>
            <person name="Hosouchi T."/>
            <person name="Kawashima K."/>
            <person name="Kohara M."/>
            <person name="Matsumoto M."/>
            <person name="Matsuno A."/>
            <person name="Muraki A."/>
            <person name="Nakayama S."/>
            <person name="Nakazaki N."/>
            <person name="Naruo K."/>
            <person name="Okumura S."/>
            <person name="Shinpo S."/>
            <person name="Takeuchi C."/>
            <person name="Wada T."/>
            <person name="Watanabe A."/>
            <person name="Yamada M."/>
            <person name="Yasuda M."/>
            <person name="Sato S."/>
            <person name="de la Bastide M."/>
            <person name="Huang E."/>
            <person name="Spiegel L."/>
            <person name="Gnoj L."/>
            <person name="O'Shaughnessy A."/>
            <person name="Preston R."/>
            <person name="Habermann K."/>
            <person name="Murray J."/>
            <person name="Johnson D."/>
            <person name="Rohlfing T."/>
            <person name="Nelson J."/>
            <person name="Stoneking T."/>
            <person name="Pepin K."/>
            <person name="Spieth J."/>
            <person name="Sekhon M."/>
            <person name="Armstrong J."/>
            <person name="Becker M."/>
            <person name="Belter E."/>
            <person name="Cordum H."/>
            <person name="Cordes M."/>
            <person name="Courtney L."/>
            <person name="Courtney W."/>
            <person name="Dante M."/>
            <person name="Du H."/>
            <person name="Edwards J."/>
            <person name="Fryman J."/>
            <person name="Haakensen B."/>
            <person name="Lamar E."/>
            <person name="Latreille P."/>
            <person name="Leonard S."/>
            <person name="Meyer R."/>
            <person name="Mulvaney E."/>
            <person name="Ozersky P."/>
            <person name="Riley A."/>
            <person name="Strowmatt C."/>
            <person name="Wagner-McPherson C."/>
            <person name="Wollam A."/>
            <person name="Yoakum M."/>
            <person name="Bell M."/>
            <person name="Dedhia N."/>
            <person name="Parnell L."/>
            <person name="Shah R."/>
            <person name="Rodriguez M."/>
            <person name="Hoon See L."/>
            <person name="Vil D."/>
            <person name="Baker J."/>
            <person name="Kirchoff K."/>
            <person name="Toth K."/>
            <person name="King L."/>
            <person name="Bahret A."/>
            <person name="Miller B."/>
            <person name="Marra M.A."/>
            <person name="Martienssen R."/>
            <person name="McCombie W.R."/>
            <person name="Wilson R.K."/>
            <person name="Murphy G."/>
            <person name="Bancroft I."/>
            <person name="Volckaert G."/>
            <person name="Wambutt R."/>
            <person name="Duesterhoeft A."/>
            <person name="Stiekema W."/>
            <person name="Pohl T."/>
            <person name="Entian K.-D."/>
            <person name="Terryn N."/>
            <person name="Hartley N."/>
            <person name="Bent E."/>
            <person name="Johnson S."/>
            <person name="Langham S.-A."/>
            <person name="McCullagh B."/>
            <person name="Robben J."/>
            <person name="Grymonprez B."/>
            <person name="Zimmermann W."/>
            <person name="Ramsperger U."/>
            <person name="Wedler H."/>
            <person name="Balke K."/>
            <person name="Wedler E."/>
            <person name="Peters S."/>
            <person name="van Staveren M."/>
            <person name="Dirkse W."/>
            <person name="Mooijman P."/>
            <person name="Klein Lankhorst R."/>
            <person name="Weitzenegger T."/>
            <person name="Bothe G."/>
            <person name="Rose M."/>
            <person name="Hauf J."/>
            <person name="Berneiser S."/>
            <person name="Hempel S."/>
            <person name="Feldpausch M."/>
            <person name="Lamberth S."/>
            <person name="Villarroel R."/>
            <person name="Gielen J."/>
            <person name="Ardiles W."/>
            <person name="Bents O."/>
            <person name="Lemcke K."/>
            <person name="Kolesov G."/>
            <person name="Mayer K.F.X."/>
            <person name="Rudd S."/>
            <person name="Schoof H."/>
            <person name="Schueller C."/>
            <person name="Zaccaria P."/>
            <person name="Mewes H.-W."/>
            <person name="Bevan M."/>
            <person name="Fransz P.F."/>
        </authorList>
    </citation>
    <scope>NUCLEOTIDE SEQUENCE [LARGE SCALE GENOMIC DNA]</scope>
    <source>
        <strain>cv. Columbia</strain>
    </source>
</reference>
<reference key="2">
    <citation type="journal article" date="2017" name="Plant J.">
        <title>Araport11: a complete reannotation of the Arabidopsis thaliana reference genome.</title>
        <authorList>
            <person name="Cheng C.Y."/>
            <person name="Krishnakumar V."/>
            <person name="Chan A.P."/>
            <person name="Thibaud-Nissen F."/>
            <person name="Schobel S."/>
            <person name="Town C.D."/>
        </authorList>
    </citation>
    <scope>GENOME REANNOTATION</scope>
    <source>
        <strain>cv. Columbia</strain>
    </source>
</reference>
<reference key="3">
    <citation type="submission" date="2004-03" db="EMBL/GenBank/DDBJ databases">
        <title>Arabidopsis ORF clones.</title>
        <authorList>
            <person name="Cheuk R.F."/>
            <person name="Chen H."/>
            <person name="Kim C.J."/>
            <person name="Shinn P."/>
            <person name="Carninci P."/>
            <person name="Hayashizaki Y."/>
            <person name="Ishida J."/>
            <person name="Kamiya A."/>
            <person name="Kawai J."/>
            <person name="Narusaka M."/>
            <person name="Sakurai T."/>
            <person name="Satou M."/>
            <person name="Seki M."/>
            <person name="Shinozaki K."/>
            <person name="Ecker J.R."/>
        </authorList>
    </citation>
    <scope>NUCLEOTIDE SEQUENCE [LARGE SCALE MRNA]</scope>
    <source>
        <strain>cv. Columbia</strain>
    </source>
</reference>
<reference key="4">
    <citation type="journal article" date="2006" name="Plant Physiol.">
        <title>The Arabidopsis zinc finger-homeodomain genes encode proteins with unique biochemical properties that are coordinately expressed during floral development.</title>
        <authorList>
            <person name="Tan Q.K."/>
            <person name="Irish V.F."/>
        </authorList>
    </citation>
    <scope>INTERACTION WITH ZHD1; ZHD2; ZHD4; ZHD10 AND ZHD11</scope>
    <scope>TISSUE SPECIFICITY</scope>
    <scope>GENE FAMILY</scope>
</reference>
<reference key="5">
    <citation type="journal article" date="2008" name="J. Integr. Plant Biol.">
        <title>Phylogenetic analysis of the plant-specific zinc finger-homeobox and mini zinc finger gene families.</title>
        <authorList>
            <person name="Hu W."/>
            <person name="dePamphilis C.W."/>
            <person name="Ma H."/>
        </authorList>
    </citation>
    <scope>GENE FAMILY</scope>
    <scope>NOMENCLATURE</scope>
</reference>
<reference key="6">
    <citation type="journal article" date="2009" name="Plant Mol. Biol.">
        <title>Stress induced and nuclear localized HIPP26 from Arabidopsis thaliana interacts via its heavy metal associated domain with the drought stress related zinc finger transcription factor ATHB29.</title>
        <authorList>
            <person name="Barth O."/>
            <person name="Vogt S."/>
            <person name="Uhlemann R."/>
            <person name="Zschiesche W."/>
            <person name="Humbeck K."/>
        </authorList>
    </citation>
    <scope>INTERACTION WITH HIPP30</scope>
</reference>
<reference key="7">
    <citation type="journal article" date="2011" name="J. Biol. Chem.">
        <title>Nuclear import and DNA binding of the ZHD5 transcription factor is modulated by a competitive peptide inhibitor in Arabidopsis.</title>
        <authorList>
            <person name="Hong S.-Y."/>
            <person name="Kim O.-K."/>
            <person name="Kim S.-G."/>
            <person name="Yang M.-S."/>
            <person name="Park C.-M."/>
        </authorList>
    </citation>
    <scope>INTERACTION WITH MIF1; MIF2 AND MIF3</scope>
    <scope>GENE FAMILY</scope>
    <scope>NOMENCLATURE</scope>
    <source>
        <strain>cv. Columbia</strain>
    </source>
</reference>
<gene>
    <name type="primary">ZHD8</name>
    <name type="synonym">HB30</name>
    <name type="synonym">ZFHD3</name>
    <name type="ordered locus">At5g15210</name>
    <name type="ORF">F8M21.100</name>
</gene>
<evidence type="ECO:0000250" key="1"/>
<evidence type="ECO:0000250" key="2">
    <source>
        <dbReference type="UniProtKB" id="Q9LHF0"/>
    </source>
</evidence>
<evidence type="ECO:0000255" key="3">
    <source>
        <dbReference type="PROSITE-ProRule" id="PRU00856"/>
    </source>
</evidence>
<evidence type="ECO:0000256" key="4">
    <source>
        <dbReference type="SAM" id="MobiDB-lite"/>
    </source>
</evidence>
<evidence type="ECO:0000269" key="5">
    <source>
    </source>
</evidence>
<evidence type="ECO:0000269" key="6">
    <source>
    </source>
</evidence>
<evidence type="ECO:0000269" key="7">
    <source>
    </source>
</evidence>
<accession>Q9LXG0</accession>
<organism>
    <name type="scientific">Arabidopsis thaliana</name>
    <name type="common">Mouse-ear cress</name>
    <dbReference type="NCBI Taxonomy" id="3702"/>
    <lineage>
        <taxon>Eukaryota</taxon>
        <taxon>Viridiplantae</taxon>
        <taxon>Streptophyta</taxon>
        <taxon>Embryophyta</taxon>
        <taxon>Tracheophyta</taxon>
        <taxon>Spermatophyta</taxon>
        <taxon>Magnoliopsida</taxon>
        <taxon>eudicotyledons</taxon>
        <taxon>Gunneridae</taxon>
        <taxon>Pentapetalae</taxon>
        <taxon>rosids</taxon>
        <taxon>malvids</taxon>
        <taxon>Brassicales</taxon>
        <taxon>Brassicaceae</taxon>
        <taxon>Camelineae</taxon>
        <taxon>Arabidopsis</taxon>
    </lineage>
</organism>
<feature type="chain" id="PRO_0000426022" description="Zinc-finger homeodomain protein 8">
    <location>
        <begin position="1"/>
        <end position="271"/>
    </location>
</feature>
<feature type="zinc finger region" description="ZF-HD dimerization-type; degenerate" evidence="3">
    <location>
        <begin position="56"/>
        <end position="107"/>
    </location>
</feature>
<feature type="DNA-binding region" description="Homeobox">
    <location>
        <begin position="179"/>
        <end position="242"/>
    </location>
</feature>
<feature type="region of interest" description="Disordered" evidence="4">
    <location>
        <begin position="125"/>
        <end position="154"/>
    </location>
</feature>
<feature type="site" description="Required for DNA-binding" evidence="1">
    <location>
        <position position="231"/>
    </location>
</feature>
<feature type="modified residue" description="Phosphoserine" evidence="2">
    <location>
        <position position="16"/>
    </location>
</feature>
<protein>
    <recommendedName>
        <fullName>Zinc-finger homeodomain protein 8</fullName>
        <shortName>AtZHD8</shortName>
    </recommendedName>
    <alternativeName>
        <fullName>Homeobox protein 30</fullName>
        <shortName>AtHB-30</shortName>
    </alternativeName>
    <alternativeName>
        <fullName>Zinc finger homeodomain transcriptional factor ZFHD3</fullName>
    </alternativeName>
</protein>
<proteinExistence type="evidence at protein level"/>
<comment type="function">
    <text>Putative transcription factor.</text>
</comment>
<comment type="subunit">
    <text evidence="1 5 6 7">Homo- and heterodimer with other ZFHD proteins (By similarity). Interacts with MIF1, MIF2 and MIF3; these interactions prevent nuclear localization and DNA-binding to inhibit transcription regulation activity. Binds to ZHD1, ZHD2, ZHD4, ZHD10 and ZHD11. Interacts with HIPP30 (PubMed:18974936).</text>
</comment>
<comment type="interaction">
    <interactant intactId="EBI-1806405">
        <id>Q9LXG0</id>
    </interactant>
    <interactant intactId="EBI-15191779">
        <id>Q9LJW5</id>
        <label>MIF2</label>
    </interactant>
    <organismsDiffer>false</organismsDiffer>
    <experiments>3</experiments>
</comment>
<comment type="interaction">
    <interactant intactId="EBI-1806405">
        <id>Q9LXG0</id>
    </interactant>
    <interactant intactId="EBI-15194007">
        <id>F4K5X6</id>
        <label>RVE2</label>
    </interactant>
    <organismsDiffer>false</organismsDiffer>
    <experiments>3</experiments>
</comment>
<comment type="interaction">
    <interactant intactId="EBI-1806405">
        <id>Q9LXG0</id>
    </interactant>
    <interactant intactId="EBI-766685">
        <id>Q9FKP8</id>
        <label>ZHD1</label>
    </interactant>
    <organismsDiffer>false</organismsDiffer>
    <experiments>4</experiments>
</comment>
<comment type="interaction">
    <interactant intactId="EBI-1806405">
        <id>Q9LXG0</id>
    </interactant>
    <interactant intactId="EBI-1806256">
        <id>Q9SB61</id>
        <label>ZHD1</label>
    </interactant>
    <organismsDiffer>false</organismsDiffer>
    <experiments>3</experiments>
</comment>
<comment type="interaction">
    <interactant intactId="EBI-1806405">
        <id>Q9LXG0</id>
    </interactant>
    <interactant intactId="EBI-1806298">
        <id>Q9FIW9</id>
        <label>ZHD10</label>
    </interactant>
    <organismsDiffer>false</organismsDiffer>
    <experiments>7</experiments>
</comment>
<comment type="interaction">
    <interactant intactId="EBI-1806405">
        <id>Q9LXG0</id>
    </interactant>
    <interactant intactId="EBI-1806382">
        <id>Q9SVL0</id>
        <label>ZHD7</label>
    </interactant>
    <organismsDiffer>false</organismsDiffer>
    <experiments>4</experiments>
</comment>
<comment type="interaction">
    <interactant intactId="EBI-1806405">
        <id>Q9LXG0</id>
    </interactant>
    <interactant intactId="EBI-1806440">
        <id>Q9LHF0</id>
        <label>ZHD9</label>
    </interactant>
    <organismsDiffer>false</organismsDiffer>
    <experiments>3</experiments>
</comment>
<comment type="subcellular location">
    <subcellularLocation>
        <location evidence="1">Nucleus</location>
    </subcellularLocation>
    <text evidence="1">Interactions with MIF proteins prevent nuclear subcellular location and leads to a scattered repartition throughout the cytoplasm.</text>
</comment>
<comment type="tissue specificity">
    <text evidence="5">Mostly expressed in flowers and inflorescence.</text>
</comment>
<comment type="domain">
    <text>The homeodomain differs form the typical one by having namely 4 instead of 3 extra amino acids inserted in the loop between helix 1 and helix 2.</text>
</comment>
<keyword id="KW-0238">DNA-binding</keyword>
<keyword id="KW-0371">Homeobox</keyword>
<keyword id="KW-0479">Metal-binding</keyword>
<keyword id="KW-0539">Nucleus</keyword>
<keyword id="KW-0597">Phosphoprotein</keyword>
<keyword id="KW-1185">Reference proteome</keyword>
<keyword id="KW-0804">Transcription</keyword>
<keyword id="KW-0805">Transcription regulation</keyword>
<keyword id="KW-0862">Zinc</keyword>
<keyword id="KW-0863">Zinc-finger</keyword>
<sequence length="271" mass="29382">MDVIATTTTIVSDLDSRQPEIEAPIRIQPAKPISFSNGKRCHHHHLASEAVAVATYKECLKNHAAGIGGHALDGCGEFMPSPSFNSNDPASLTCAACGCHRNFHRREEDPSSLSAIVPAIEFRPHNRHQLPPPPPPHLAGIRSPDDDDSASPPPISSSYMLLALSGGRGGANTAVPMSRKRFRTKFSQYQKEKMFEFSERVGWRMPKADDVVVKEFCREIGVDKSVFKVWMHNNKISGRSGARRANGGVVVGGVGDSRQSVVPTNGSFSST</sequence>
<dbReference type="EMBL" id="AL353993">
    <property type="protein sequence ID" value="CAB89331.1"/>
    <property type="molecule type" value="Genomic_DNA"/>
</dbReference>
<dbReference type="EMBL" id="CP002688">
    <property type="protein sequence ID" value="AED92130.1"/>
    <property type="molecule type" value="Genomic_DNA"/>
</dbReference>
<dbReference type="EMBL" id="BT012195">
    <property type="protein sequence ID" value="AAS76682.1"/>
    <property type="molecule type" value="mRNA"/>
</dbReference>
<dbReference type="PIR" id="T49956">
    <property type="entry name" value="T49956"/>
</dbReference>
<dbReference type="RefSeq" id="NP_197025.1">
    <property type="nucleotide sequence ID" value="NM_121525.4"/>
</dbReference>
<dbReference type="SMR" id="Q9LXG0"/>
<dbReference type="BioGRID" id="16650">
    <property type="interactions" value="57"/>
</dbReference>
<dbReference type="FunCoup" id="Q9LXG0">
    <property type="interactions" value="6"/>
</dbReference>
<dbReference type="IntAct" id="Q9LXG0">
    <property type="interactions" value="56"/>
</dbReference>
<dbReference type="STRING" id="3702.Q9LXG0"/>
<dbReference type="GlyGen" id="Q9LXG0">
    <property type="glycosylation" value="1 site, 1 O-linked glycan (1 site)"/>
</dbReference>
<dbReference type="iPTMnet" id="Q9LXG0"/>
<dbReference type="PaxDb" id="3702-AT5G15210.1"/>
<dbReference type="ProteomicsDB" id="232309"/>
<dbReference type="EnsemblPlants" id="AT5G15210.1">
    <property type="protein sequence ID" value="AT5G15210.1"/>
    <property type="gene ID" value="AT5G15210"/>
</dbReference>
<dbReference type="GeneID" id="831373"/>
<dbReference type="Gramene" id="AT5G15210.1">
    <property type="protein sequence ID" value="AT5G15210.1"/>
    <property type="gene ID" value="AT5G15210"/>
</dbReference>
<dbReference type="KEGG" id="ath:AT5G15210"/>
<dbReference type="Araport" id="AT5G15210"/>
<dbReference type="TAIR" id="AT5G15210">
    <property type="gene designation" value="HB30"/>
</dbReference>
<dbReference type="eggNOG" id="ENOG502QWG3">
    <property type="taxonomic scope" value="Eukaryota"/>
</dbReference>
<dbReference type="HOGENOM" id="CLU_039237_0_0_1"/>
<dbReference type="InParanoid" id="Q9LXG0"/>
<dbReference type="OMA" id="SNGKRCH"/>
<dbReference type="OrthoDB" id="1929626at2759"/>
<dbReference type="PhylomeDB" id="Q9LXG0"/>
<dbReference type="PRO" id="PR:Q9LXG0"/>
<dbReference type="Proteomes" id="UP000006548">
    <property type="component" value="Chromosome 5"/>
</dbReference>
<dbReference type="ExpressionAtlas" id="Q9LXG0">
    <property type="expression patterns" value="baseline and differential"/>
</dbReference>
<dbReference type="GO" id="GO:0005634">
    <property type="term" value="C:nucleus"/>
    <property type="evidence" value="ECO:0000250"/>
    <property type="project" value="UniProtKB"/>
</dbReference>
<dbReference type="GO" id="GO:0003677">
    <property type="term" value="F:DNA binding"/>
    <property type="evidence" value="ECO:0000250"/>
    <property type="project" value="TAIR"/>
</dbReference>
<dbReference type="GO" id="GO:0042803">
    <property type="term" value="F:protein homodimerization activity"/>
    <property type="evidence" value="ECO:0000250"/>
    <property type="project" value="UniProtKB"/>
</dbReference>
<dbReference type="GO" id="GO:0000976">
    <property type="term" value="F:transcription cis-regulatory region binding"/>
    <property type="evidence" value="ECO:0000353"/>
    <property type="project" value="TAIR"/>
</dbReference>
<dbReference type="GO" id="GO:0008270">
    <property type="term" value="F:zinc ion binding"/>
    <property type="evidence" value="ECO:0007669"/>
    <property type="project" value="UniProtKB-KW"/>
</dbReference>
<dbReference type="GO" id="GO:0019760">
    <property type="term" value="P:glucosinolate metabolic process"/>
    <property type="evidence" value="ECO:0000315"/>
    <property type="project" value="TAIR"/>
</dbReference>
<dbReference type="FunFam" id="1.10.10.60:FF:000257">
    <property type="entry name" value="Zinc-finger homeodomain protein 2"/>
    <property type="match status" value="1"/>
</dbReference>
<dbReference type="Gene3D" id="1.10.10.60">
    <property type="entry name" value="Homeodomain-like"/>
    <property type="match status" value="1"/>
</dbReference>
<dbReference type="InterPro" id="IPR009057">
    <property type="entry name" value="Homeodomain-like_sf"/>
</dbReference>
<dbReference type="InterPro" id="IPR006455">
    <property type="entry name" value="Homeodomain_ZF_HD"/>
</dbReference>
<dbReference type="InterPro" id="IPR006456">
    <property type="entry name" value="ZF_HD_homeobox_Cys/His_dimer"/>
</dbReference>
<dbReference type="NCBIfam" id="TIGR01565">
    <property type="entry name" value="homeo_ZF_HD"/>
    <property type="match status" value="1"/>
</dbReference>
<dbReference type="NCBIfam" id="TIGR01566">
    <property type="entry name" value="ZF_HD_prot_N"/>
    <property type="match status" value="1"/>
</dbReference>
<dbReference type="PANTHER" id="PTHR31948">
    <property type="entry name" value="ZINC-FINGER HOMEODOMAIN PROTEIN 2"/>
    <property type="match status" value="1"/>
</dbReference>
<dbReference type="PANTHER" id="PTHR31948:SF58">
    <property type="entry name" value="ZINC-FINGER HOMEODOMAIN PROTEIN 8"/>
    <property type="match status" value="1"/>
</dbReference>
<dbReference type="Pfam" id="PF04770">
    <property type="entry name" value="ZF-HD_dimer"/>
    <property type="match status" value="1"/>
</dbReference>
<dbReference type="SUPFAM" id="SSF46689">
    <property type="entry name" value="Homeodomain-like"/>
    <property type="match status" value="1"/>
</dbReference>
<dbReference type="PROSITE" id="PS51523">
    <property type="entry name" value="ZF_HD_DIMER"/>
    <property type="match status" value="1"/>
</dbReference>